<protein>
    <recommendedName>
        <fullName evidence="1">Octanoyltransferase</fullName>
        <ecNumber evidence="1">2.3.1.181</ecNumber>
    </recommendedName>
    <alternativeName>
        <fullName evidence="1">Lipoate-protein ligase B</fullName>
    </alternativeName>
    <alternativeName>
        <fullName evidence="1">Lipoyl/octanoyl transferase</fullName>
    </alternativeName>
    <alternativeName>
        <fullName evidence="1">Octanoyl-[acyl-carrier-protein]-protein N-octanoyltransferase</fullName>
    </alternativeName>
</protein>
<comment type="function">
    <text evidence="1">Catalyzes the transfer of endogenously produced octanoic acid from octanoyl-acyl-carrier-protein onto the lipoyl domains of lipoate-dependent enzymes. Lipoyl-ACP can also act as a substrate although octanoyl-ACP is likely to be the physiological substrate.</text>
</comment>
<comment type="catalytic activity">
    <reaction evidence="1">
        <text>octanoyl-[ACP] + L-lysyl-[protein] = N(6)-octanoyl-L-lysyl-[protein] + holo-[ACP] + H(+)</text>
        <dbReference type="Rhea" id="RHEA:17665"/>
        <dbReference type="Rhea" id="RHEA-COMP:9636"/>
        <dbReference type="Rhea" id="RHEA-COMP:9685"/>
        <dbReference type="Rhea" id="RHEA-COMP:9752"/>
        <dbReference type="Rhea" id="RHEA-COMP:9928"/>
        <dbReference type="ChEBI" id="CHEBI:15378"/>
        <dbReference type="ChEBI" id="CHEBI:29969"/>
        <dbReference type="ChEBI" id="CHEBI:64479"/>
        <dbReference type="ChEBI" id="CHEBI:78463"/>
        <dbReference type="ChEBI" id="CHEBI:78809"/>
        <dbReference type="EC" id="2.3.1.181"/>
    </reaction>
</comment>
<comment type="pathway">
    <text evidence="1">Protein modification; protein lipoylation via endogenous pathway; protein N(6)-(lipoyl)lysine from octanoyl-[acyl-carrier-protein]: step 1/2.</text>
</comment>
<comment type="subcellular location">
    <subcellularLocation>
        <location evidence="1">Cytoplasm</location>
    </subcellularLocation>
</comment>
<comment type="miscellaneous">
    <text evidence="1">In the reaction, the free carboxyl group of octanoic acid is attached via an amide linkage to the epsilon-amino group of a specific lysine residue of lipoyl domains of lipoate-dependent enzymes.</text>
</comment>
<comment type="similarity">
    <text evidence="1">Belongs to the LipB family.</text>
</comment>
<dbReference type="EC" id="2.3.1.181" evidence="1"/>
<dbReference type="EMBL" id="CP000825">
    <property type="protein sequence ID" value="ABV50094.1"/>
    <property type="molecule type" value="Genomic_DNA"/>
</dbReference>
<dbReference type="RefSeq" id="WP_002806964.1">
    <property type="nucleotide sequence ID" value="NC_009840.1"/>
</dbReference>
<dbReference type="SMR" id="A8G3B3"/>
<dbReference type="STRING" id="93060.P9215_04781"/>
<dbReference type="KEGG" id="pmh:P9215_04781"/>
<dbReference type="eggNOG" id="COG0321">
    <property type="taxonomic scope" value="Bacteria"/>
</dbReference>
<dbReference type="HOGENOM" id="CLU_035168_1_3_3"/>
<dbReference type="OrthoDB" id="9787061at2"/>
<dbReference type="UniPathway" id="UPA00538">
    <property type="reaction ID" value="UER00592"/>
</dbReference>
<dbReference type="Proteomes" id="UP000002014">
    <property type="component" value="Chromosome"/>
</dbReference>
<dbReference type="GO" id="GO:0005737">
    <property type="term" value="C:cytoplasm"/>
    <property type="evidence" value="ECO:0007669"/>
    <property type="project" value="UniProtKB-SubCell"/>
</dbReference>
<dbReference type="GO" id="GO:0033819">
    <property type="term" value="F:lipoyl(octanoyl) transferase activity"/>
    <property type="evidence" value="ECO:0007669"/>
    <property type="project" value="UniProtKB-EC"/>
</dbReference>
<dbReference type="GO" id="GO:0036211">
    <property type="term" value="P:protein modification process"/>
    <property type="evidence" value="ECO:0007669"/>
    <property type="project" value="InterPro"/>
</dbReference>
<dbReference type="CDD" id="cd16444">
    <property type="entry name" value="LipB"/>
    <property type="match status" value="1"/>
</dbReference>
<dbReference type="Gene3D" id="3.30.930.10">
    <property type="entry name" value="Bira Bifunctional Protein, Domain 2"/>
    <property type="match status" value="1"/>
</dbReference>
<dbReference type="HAMAP" id="MF_00013">
    <property type="entry name" value="LipB"/>
    <property type="match status" value="1"/>
</dbReference>
<dbReference type="InterPro" id="IPR045864">
    <property type="entry name" value="aa-tRNA-synth_II/BPL/LPL"/>
</dbReference>
<dbReference type="InterPro" id="IPR004143">
    <property type="entry name" value="BPL_LPL_catalytic"/>
</dbReference>
<dbReference type="InterPro" id="IPR000544">
    <property type="entry name" value="Octanoyltransferase"/>
</dbReference>
<dbReference type="InterPro" id="IPR020605">
    <property type="entry name" value="Octanoyltransferase_CS"/>
</dbReference>
<dbReference type="NCBIfam" id="TIGR00214">
    <property type="entry name" value="lipB"/>
    <property type="match status" value="1"/>
</dbReference>
<dbReference type="PANTHER" id="PTHR10993:SF7">
    <property type="entry name" value="LIPOYLTRANSFERASE 2, MITOCHONDRIAL-RELATED"/>
    <property type="match status" value="1"/>
</dbReference>
<dbReference type="PANTHER" id="PTHR10993">
    <property type="entry name" value="OCTANOYLTRANSFERASE"/>
    <property type="match status" value="1"/>
</dbReference>
<dbReference type="Pfam" id="PF21948">
    <property type="entry name" value="LplA-B_cat"/>
    <property type="match status" value="1"/>
</dbReference>
<dbReference type="PIRSF" id="PIRSF016262">
    <property type="entry name" value="LPLase"/>
    <property type="match status" value="1"/>
</dbReference>
<dbReference type="SUPFAM" id="SSF55681">
    <property type="entry name" value="Class II aaRS and biotin synthetases"/>
    <property type="match status" value="1"/>
</dbReference>
<dbReference type="PROSITE" id="PS51733">
    <property type="entry name" value="BPL_LPL_CATALYTIC"/>
    <property type="match status" value="1"/>
</dbReference>
<dbReference type="PROSITE" id="PS01313">
    <property type="entry name" value="LIPB"/>
    <property type="match status" value="1"/>
</dbReference>
<proteinExistence type="inferred from homology"/>
<name>LIPB_PROM2</name>
<sequence length="216" mass="25126">MVNRTAIIKQPDNISFFNDVYKLQKEYQESLILDNSNPDFIWIGEHQLCYTLGRGSNYDNLLFSLNDDNYDVFKIDRGGEVTCHMPGQLVTYLVLDLKNFNKDLNWYLRKIEEIIIKILGTFNIDCHSRDGFTGVWIGNKKIASIGIGCKRWITINGFSINIDCELENFNKIVPCGIENCLMANMIDYNKNLNIQEVKRIVKKIIQEEFNFDFVSK</sequence>
<keyword id="KW-0012">Acyltransferase</keyword>
<keyword id="KW-0963">Cytoplasm</keyword>
<keyword id="KW-0808">Transferase</keyword>
<gene>
    <name evidence="1" type="primary">lipB</name>
    <name type="ordered locus">P9215_04781</name>
</gene>
<accession>A8G3B3</accession>
<reference key="1">
    <citation type="journal article" date="2007" name="PLoS Genet.">
        <title>Patterns and implications of gene gain and loss in the evolution of Prochlorococcus.</title>
        <authorList>
            <person name="Kettler G.C."/>
            <person name="Martiny A.C."/>
            <person name="Huang K."/>
            <person name="Zucker J."/>
            <person name="Coleman M.L."/>
            <person name="Rodrigue S."/>
            <person name="Chen F."/>
            <person name="Lapidus A."/>
            <person name="Ferriera S."/>
            <person name="Johnson J."/>
            <person name="Steglich C."/>
            <person name="Church G.M."/>
            <person name="Richardson P."/>
            <person name="Chisholm S.W."/>
        </authorList>
    </citation>
    <scope>NUCLEOTIDE SEQUENCE [LARGE SCALE GENOMIC DNA]</scope>
    <source>
        <strain>MIT 9215</strain>
    </source>
</reference>
<evidence type="ECO:0000255" key="1">
    <source>
        <dbReference type="HAMAP-Rule" id="MF_00013"/>
    </source>
</evidence>
<evidence type="ECO:0000255" key="2">
    <source>
        <dbReference type="PROSITE-ProRule" id="PRU01067"/>
    </source>
</evidence>
<feature type="chain" id="PRO_1000057107" description="Octanoyltransferase">
    <location>
        <begin position="1"/>
        <end position="216"/>
    </location>
</feature>
<feature type="domain" description="BPL/LPL catalytic" evidence="2">
    <location>
        <begin position="35"/>
        <end position="213"/>
    </location>
</feature>
<feature type="active site" description="Acyl-thioester intermediate" evidence="1">
    <location>
        <position position="175"/>
    </location>
</feature>
<feature type="binding site" evidence="1">
    <location>
        <begin position="77"/>
        <end position="84"/>
    </location>
    <ligand>
        <name>substrate</name>
    </ligand>
</feature>
<feature type="binding site" evidence="1">
    <location>
        <begin position="144"/>
        <end position="146"/>
    </location>
    <ligand>
        <name>substrate</name>
    </ligand>
</feature>
<feature type="binding site" evidence="1">
    <location>
        <begin position="157"/>
        <end position="159"/>
    </location>
    <ligand>
        <name>substrate</name>
    </ligand>
</feature>
<feature type="site" description="Lowers pKa of active site Cys" evidence="1">
    <location>
        <position position="141"/>
    </location>
</feature>
<organism>
    <name type="scientific">Prochlorococcus marinus (strain MIT 9215)</name>
    <dbReference type="NCBI Taxonomy" id="93060"/>
    <lineage>
        <taxon>Bacteria</taxon>
        <taxon>Bacillati</taxon>
        <taxon>Cyanobacteriota</taxon>
        <taxon>Cyanophyceae</taxon>
        <taxon>Synechococcales</taxon>
        <taxon>Prochlorococcaceae</taxon>
        <taxon>Prochlorococcus</taxon>
    </lineage>
</organism>